<keyword id="KW-0002">3D-structure</keyword>
<keyword id="KW-0007">Acetylation</keyword>
<keyword id="KW-0156">Chromatin regulator</keyword>
<keyword id="KW-0175">Coiled coil</keyword>
<keyword id="KW-0963">Cytoplasm</keyword>
<keyword id="KW-0903">Direct protein sequencing</keyword>
<keyword id="KW-0225">Disease variant</keyword>
<keyword id="KW-1017">Isopeptide bond</keyword>
<keyword id="KW-0488">Methylation</keyword>
<keyword id="KW-0524">Neurogenesis</keyword>
<keyword id="KW-0539">Nucleus</keyword>
<keyword id="KW-0597">Phosphoprotein</keyword>
<keyword id="KW-1267">Proteomics identification</keyword>
<keyword id="KW-1185">Reference proteome</keyword>
<keyword id="KW-0804">Transcription</keyword>
<keyword id="KW-0805">Transcription regulation</keyword>
<keyword id="KW-0832">Ubl conjugation</keyword>
<feature type="initiator methionine" description="Removed" evidence="23 34">
    <location>
        <position position="1"/>
    </location>
</feature>
<feature type="chain" id="PRO_0000197115" description="SWI/SNF complex subunit SMARCC1">
    <location>
        <begin position="2"/>
        <end position="1105"/>
    </location>
</feature>
<feature type="domain" description="MarR-like" evidence="5">
    <location>
        <begin position="38"/>
        <end position="164"/>
    </location>
</feature>
<feature type="domain" description="BRCT; N-terminus" evidence="5">
    <location>
        <begin position="168"/>
        <end position="211"/>
    </location>
</feature>
<feature type="domain" description="Chromo" evidence="5">
    <location>
        <begin position="217"/>
        <end position="245"/>
    </location>
</feature>
<feature type="domain" description="BRCT; C-terminus" evidence="5">
    <location>
        <begin position="261"/>
        <end position="285"/>
    </location>
</feature>
<feature type="domain" description="SWIRM" evidence="3">
    <location>
        <begin position="449"/>
        <end position="546"/>
    </location>
</feature>
<feature type="domain" description="SANT" evidence="4">
    <location>
        <begin position="618"/>
        <end position="669"/>
    </location>
</feature>
<feature type="region of interest" description="MarR-like, BRCT and chromo domains module" evidence="5">
    <location>
        <begin position="28"/>
        <end position="302"/>
    </location>
</feature>
<feature type="region of interest" description="Disordered" evidence="6">
    <location>
        <begin position="296"/>
        <end position="439"/>
    </location>
</feature>
<feature type="region of interest" description="Disordered" evidence="6">
    <location>
        <begin position="745"/>
        <end position="860"/>
    </location>
</feature>
<feature type="region of interest" description="Disordered" evidence="6">
    <location>
        <begin position="956"/>
        <end position="1028"/>
    </location>
</feature>
<feature type="region of interest" description="Disordered" evidence="6">
    <location>
        <begin position="1041"/>
        <end position="1105"/>
    </location>
</feature>
<feature type="coiled-coil region" evidence="2">
    <location>
        <begin position="914"/>
        <end position="946"/>
    </location>
</feature>
<feature type="compositionally biased region" description="Basic and acidic residues" evidence="6">
    <location>
        <begin position="302"/>
        <end position="318"/>
    </location>
</feature>
<feature type="compositionally biased region" description="Acidic residues" evidence="6">
    <location>
        <begin position="776"/>
        <end position="785"/>
    </location>
</feature>
<feature type="compositionally biased region" description="Basic and acidic residues" evidence="6">
    <location>
        <begin position="789"/>
        <end position="860"/>
    </location>
</feature>
<feature type="compositionally biased region" description="Low complexity" evidence="6">
    <location>
        <begin position="957"/>
        <end position="993"/>
    </location>
</feature>
<feature type="compositionally biased region" description="Pro residues" evidence="6">
    <location>
        <begin position="994"/>
        <end position="1017"/>
    </location>
</feature>
<feature type="compositionally biased region" description="Pro residues" evidence="6">
    <location>
        <begin position="1048"/>
        <end position="1057"/>
    </location>
</feature>
<feature type="compositionally biased region" description="Pro residues" evidence="6">
    <location>
        <begin position="1073"/>
        <end position="1105"/>
    </location>
</feature>
<feature type="modified residue" description="N-acetylalanine" evidence="23 34">
    <location>
        <position position="2"/>
    </location>
</feature>
<feature type="modified residue" description="Phosphoserine" evidence="28 32 35">
    <location>
        <position position="310"/>
    </location>
</feature>
<feature type="modified residue" description="Phosphoserine" evidence="29 31 32 33 35 36">
    <location>
        <position position="328"/>
    </location>
</feature>
<feature type="modified residue" description="Phosphoserine" evidence="29 31 32 33 35 36">
    <location>
        <position position="330"/>
    </location>
</feature>
<feature type="modified residue" description="Phosphothreonine" evidence="29 33">
    <location>
        <position position="335"/>
    </location>
</feature>
<feature type="modified residue" description="N6-acetyllysine" evidence="30">
    <location>
        <position position="345"/>
    </location>
</feature>
<feature type="modified residue" description="N6-acetyllysine" evidence="30">
    <location>
        <position position="346"/>
    </location>
</feature>
<feature type="modified residue" description="Phosphoserine" evidence="33">
    <location>
        <position position="350"/>
    </location>
</feature>
<feature type="modified residue" description="N6-acetyllysine" evidence="30">
    <location>
        <position position="354"/>
    </location>
</feature>
<feature type="modified residue" description="Phosphoserine" evidence="29 32">
    <location>
        <position position="357"/>
    </location>
</feature>
<feature type="modified residue" description="N6-acetyllysine; alternate" evidence="30">
    <location>
        <position position="359"/>
    </location>
</feature>
<feature type="modified residue" description="Phosphothreonine" evidence="33">
    <location>
        <position position="398"/>
    </location>
</feature>
<feature type="modified residue" description="Phosphoserine" evidence="32 35">
    <location>
        <position position="573"/>
    </location>
</feature>
<feature type="modified residue" description="Phosphoserine" evidence="33">
    <location>
        <position position="822"/>
    </location>
</feature>
<feature type="modified residue" description="Phosphoserine" evidence="33">
    <location>
        <position position="825"/>
    </location>
</feature>
<feature type="modified residue" description="N6-acetyllysine" evidence="30">
    <location>
        <position position="948"/>
    </location>
</feature>
<feature type="modified residue" description="Asymmetric dimethylarginine" evidence="1">
    <location>
        <position position="1064"/>
    </location>
</feature>
<feature type="cross-link" description="Glycyl lysine isopeptide (Lys-Gly) (interchain with G-Cter in SUMO2)" evidence="39">
    <location>
        <position position="179"/>
    </location>
</feature>
<feature type="cross-link" description="Glycyl lysine isopeptide (Lys-Gly) (interchain with G-Cter in SUMO2); alternate" evidence="37 38 39">
    <location>
        <position position="359"/>
    </location>
</feature>
<feature type="cross-link" description="Glycyl lysine isopeptide (Lys-Gly) (interchain with G-Cter in SUMO2)" evidence="38 39">
    <location>
        <position position="592"/>
    </location>
</feature>
<feature type="cross-link" description="Glycyl lysine isopeptide (Lys-Gly) (interchain with G-Cter in SUMO2)" evidence="39">
    <location>
        <position position="739"/>
    </location>
</feature>
<feature type="cross-link" description="Glycyl lysine isopeptide (Lys-Gly) (interchain with G-Cter in SUMO2)" evidence="39">
    <location>
        <position position="796"/>
    </location>
</feature>
<feature type="cross-link" description="Glycyl lysine isopeptide (Lys-Gly) (interchain with G-Cter in SUMO2)" evidence="39">
    <location>
        <position position="829"/>
    </location>
</feature>
<feature type="cross-link" description="Glycyl lysine isopeptide (Lys-Gly) (interchain with G-Cter in SUMO2)" evidence="39">
    <location>
        <position position="856"/>
    </location>
</feature>
<feature type="sequence variant" id="VAR_083428" description="In HYC5." evidence="17">
    <location>
        <begin position="179"/>
        <end position="1105"/>
    </location>
</feature>
<feature type="sequence variant" id="VAR_083429" description="In HYC5; dbSNP:rs1576408057." evidence="17">
    <original>H</original>
    <variation>P</variation>
    <location>
        <position position="526"/>
    </location>
</feature>
<feature type="sequence variant" id="VAR_088111" description="In HYC5." evidence="20">
    <location>
        <begin position="575"/>
        <end position="1105"/>
    </location>
</feature>
<feature type="sequence variant" id="VAR_088112" description="In HYC5; dbSNP:rs570056024." evidence="20">
    <original>R</original>
    <variation>C</variation>
    <location>
        <position position="652"/>
    </location>
</feature>
<feature type="sequence variant" id="VAR_020883" description="In dbSNP:rs3772406.">
    <original>P</original>
    <variation>H</variation>
    <location>
        <position position="1075"/>
    </location>
</feature>
<feature type="sequence conflict" description="In Ref. 1; AAC50693." evidence="26" ref="1">
    <original>SGIA</original>
    <variation>FGDS</variation>
    <location>
        <begin position="19"/>
        <end position="22"/>
    </location>
</feature>
<feature type="sequence conflict" description="In Ref. 1; AAC50693." evidence="26" ref="1">
    <original>T</original>
    <variation>S</variation>
    <location>
        <position position="497"/>
    </location>
</feature>
<feature type="sequence conflict" description="In Ref. 1; AAC50693." evidence="26" ref="1">
    <original>FL</original>
    <variation>GG</variation>
    <location>
        <begin position="528"/>
        <end position="529"/>
    </location>
</feature>
<feature type="sequence conflict" description="In Ref. 1; AAC50693." evidence="26" ref="1">
    <original>SGLVPLH</original>
    <variation>LACASD</variation>
    <location>
        <begin position="564"/>
        <end position="570"/>
    </location>
</feature>
<feature type="sequence conflict" description="In Ref. 1; AAC50693." evidence="26" ref="1">
    <original>E</original>
    <variation>G</variation>
    <location>
        <position position="622"/>
    </location>
</feature>
<feature type="sequence conflict" description="In Ref. 1; AAC50693." evidence="26" ref="1">
    <original>TD</original>
    <variation>SS</variation>
    <location>
        <begin position="842"/>
        <end position="843"/>
    </location>
</feature>
<feature type="sequence conflict" description="In Ref. 1; AAC50693." evidence="26" ref="1">
    <original>E</original>
    <variation>G</variation>
    <location>
        <position position="916"/>
    </location>
</feature>
<feature type="helix" evidence="43">
    <location>
        <begin position="28"/>
        <end position="31"/>
    </location>
</feature>
<feature type="strand" evidence="43">
    <location>
        <begin position="34"/>
        <end position="36"/>
    </location>
</feature>
<feature type="helix" evidence="43">
    <location>
        <begin position="40"/>
        <end position="44"/>
    </location>
</feature>
<feature type="helix" evidence="43">
    <location>
        <begin position="46"/>
        <end position="51"/>
    </location>
</feature>
<feature type="helix" evidence="43">
    <location>
        <begin position="53"/>
        <end position="62"/>
    </location>
</feature>
<feature type="helix" evidence="43">
    <location>
        <begin position="64"/>
        <end position="67"/>
    </location>
</feature>
<feature type="turn" evidence="43">
    <location>
        <begin position="68"/>
        <end position="70"/>
    </location>
</feature>
<feature type="helix" evidence="43">
    <location>
        <begin position="74"/>
        <end position="92"/>
    </location>
</feature>
<feature type="helix" evidence="43">
    <location>
        <begin position="106"/>
        <end position="109"/>
    </location>
</feature>
<feature type="helix" evidence="43">
    <location>
        <begin position="117"/>
        <end position="131"/>
    </location>
</feature>
<feature type="helix" evidence="42">
    <location>
        <begin position="142"/>
        <end position="144"/>
    </location>
</feature>
<feature type="helix" evidence="43">
    <location>
        <begin position="146"/>
        <end position="161"/>
    </location>
</feature>
<feature type="strand" evidence="43">
    <location>
        <begin position="169"/>
        <end position="172"/>
    </location>
</feature>
<feature type="helix" evidence="43">
    <location>
        <begin position="178"/>
        <end position="190"/>
    </location>
</feature>
<feature type="helix" evidence="43">
    <location>
        <begin position="199"/>
        <end position="201"/>
    </location>
</feature>
<feature type="strand" evidence="43">
    <location>
        <begin position="203"/>
        <end position="207"/>
    </location>
</feature>
<feature type="strand" evidence="43">
    <location>
        <begin position="218"/>
        <end position="225"/>
    </location>
</feature>
<feature type="strand" evidence="43">
    <location>
        <begin position="228"/>
        <end position="233"/>
    </location>
</feature>
<feature type="helix" evidence="43">
    <location>
        <begin position="238"/>
        <end position="240"/>
    </location>
</feature>
<feature type="strand" evidence="43">
    <location>
        <begin position="242"/>
        <end position="245"/>
    </location>
</feature>
<feature type="helix" evidence="43">
    <location>
        <begin position="246"/>
        <end position="248"/>
    </location>
</feature>
<feature type="strand" evidence="43">
    <location>
        <begin position="261"/>
        <end position="266"/>
    </location>
</feature>
<feature type="helix" evidence="43">
    <location>
        <begin position="268"/>
        <end position="276"/>
    </location>
</feature>
<feature type="helix" evidence="43">
    <location>
        <begin position="282"/>
        <end position="285"/>
    </location>
</feature>
<feature type="helix" evidence="41">
    <location>
        <begin position="453"/>
        <end position="455"/>
    </location>
</feature>
<feature type="helix" evidence="41">
    <location>
        <begin position="465"/>
        <end position="470"/>
    </location>
</feature>
<feature type="helix" evidence="41">
    <location>
        <begin position="472"/>
        <end position="474"/>
    </location>
</feature>
<feature type="helix" evidence="41">
    <location>
        <begin position="484"/>
        <end position="500"/>
    </location>
</feature>
<feature type="helix" evidence="41">
    <location>
        <begin position="508"/>
        <end position="512"/>
    </location>
</feature>
<feature type="helix" evidence="41">
    <location>
        <begin position="519"/>
        <end position="531"/>
    </location>
</feature>
<feature type="strand" evidence="41">
    <location>
        <begin position="534"/>
        <end position="536"/>
    </location>
</feature>
<feature type="helix" evidence="40">
    <location>
        <begin position="625"/>
        <end position="637"/>
    </location>
</feature>
<feature type="strand" evidence="40">
    <location>
        <begin position="638"/>
        <end position="640"/>
    </location>
</feature>
<feature type="helix" evidence="40">
    <location>
        <begin position="642"/>
        <end position="649"/>
    </location>
</feature>
<feature type="helix" evidence="40">
    <location>
        <begin position="654"/>
        <end position="661"/>
    </location>
</feature>
<dbReference type="EMBL" id="U66615">
    <property type="protein sequence ID" value="AAC50693.1"/>
    <property type="molecule type" value="mRNA"/>
</dbReference>
<dbReference type="EMBL" id="BC039843">
    <property type="protein sequence ID" value="AAH39843.1"/>
    <property type="status" value="ALT_SEQ"/>
    <property type="molecule type" value="mRNA"/>
</dbReference>
<dbReference type="EMBL" id="BC065253">
    <property type="protein sequence ID" value="AAH65253.1"/>
    <property type="status" value="ALT_SEQ"/>
    <property type="molecule type" value="mRNA"/>
</dbReference>
<dbReference type="EMBL" id="BC113465">
    <property type="protein sequence ID" value="AAI13466.1"/>
    <property type="molecule type" value="mRNA"/>
</dbReference>
<dbReference type="EMBL" id="BC117213">
    <property type="protein sequence ID" value="AAI17214.1"/>
    <property type="molecule type" value="mRNA"/>
</dbReference>
<dbReference type="CCDS" id="CCDS2758.1"/>
<dbReference type="RefSeq" id="NP_003065.3">
    <property type="nucleotide sequence ID" value="NM_003074.3"/>
</dbReference>
<dbReference type="PDB" id="2YUS">
    <property type="method" value="NMR"/>
    <property type="chains" value="A=610-675"/>
</dbReference>
<dbReference type="PDB" id="5GJK">
    <property type="method" value="X-ray"/>
    <property type="resolution" value="2.05 A"/>
    <property type="chains" value="A=447-540"/>
</dbReference>
<dbReference type="PDB" id="6KZ7">
    <property type="method" value="X-ray"/>
    <property type="resolution" value="2.28 A"/>
    <property type="chains" value="A/C=449-542"/>
</dbReference>
<dbReference type="PDB" id="6YXO">
    <property type="method" value="X-ray"/>
    <property type="resolution" value="2.00 A"/>
    <property type="chains" value="A/B=28-302"/>
</dbReference>
<dbReference type="PDB" id="6YXP">
    <property type="method" value="X-ray"/>
    <property type="resolution" value="1.60 A"/>
    <property type="chains" value="A/B=28-305"/>
</dbReference>
<dbReference type="PDBsum" id="2YUS"/>
<dbReference type="PDBsum" id="5GJK"/>
<dbReference type="PDBsum" id="6KZ7"/>
<dbReference type="PDBsum" id="6YXO"/>
<dbReference type="PDBsum" id="6YXP"/>
<dbReference type="BMRB" id="Q92922"/>
<dbReference type="SMR" id="Q92922"/>
<dbReference type="BioGRID" id="112483">
    <property type="interactions" value="379"/>
</dbReference>
<dbReference type="ComplexPortal" id="CPX-1164">
    <property type="entry name" value="SWI/SNF ATP-dependent chromatin remodeling complex, ACTL6A-ARID1A-SMARCA2 variant"/>
</dbReference>
<dbReference type="ComplexPortal" id="CPX-1194">
    <property type="entry name" value="Muscle cell-specific SWI/SNF ATP-dependent chromatin remodeling complex, ACTL6A-ARID1A-SMARCA2 variant"/>
</dbReference>
<dbReference type="ComplexPortal" id="CPX-1195">
    <property type="entry name" value="Embryonic stem cell-specific SWI/SNF ATP-dependent chromatin remodeling complex"/>
</dbReference>
<dbReference type="ComplexPortal" id="CPX-1196">
    <property type="entry name" value="Polybromo-associated SWI/SNF ATP-dependent chromatin remodeling complex, ACTL6B variant"/>
</dbReference>
<dbReference type="ComplexPortal" id="CPX-1199">
    <property type="entry name" value="Polybromo-associated SWI/SNF ATP-dependent chromatin remodeling complex, ACTL6A variant"/>
</dbReference>
<dbReference type="ComplexPortal" id="CPX-1201">
    <property type="entry name" value="Neural progenitor-specific SWI/SNF ATP-dependent chromatin remodeling complex, ARID1A-SMARCA2 variant"/>
</dbReference>
<dbReference type="ComplexPortal" id="CPX-1202">
    <property type="entry name" value="Neuron-specific SWI/SNF ATP-dependent chromatin remodeling complex, ARID1A-SMARCA2 variant"/>
</dbReference>
<dbReference type="ComplexPortal" id="CPX-1204">
    <property type="entry name" value="SWI/SNF ATP-dependent chromatin remodeling complex, ACTL6A-ARID1A-SMARCA4 variant"/>
</dbReference>
<dbReference type="ComplexPortal" id="CPX-1205">
    <property type="entry name" value="SWI/SNF ATP-dependent chromatin remodeling complex, ACTL6A-ARID1B-SMARCA2 variant"/>
</dbReference>
<dbReference type="ComplexPortal" id="CPX-1206">
    <property type="entry name" value="SWI/SNF ATP-dependent chromatin remodeling complex, ACTL6A-ARID1B-SMARCA4 variant"/>
</dbReference>
<dbReference type="ComplexPortal" id="CPX-1207">
    <property type="entry name" value="SWI/SNF ATP-dependent chromatin remodeling complex, ACTL6B-ARID1A-SMARCA2 variant"/>
</dbReference>
<dbReference type="ComplexPortal" id="CPX-1209">
    <property type="entry name" value="SWI/SNF ATP-dependent chromatin remodeling complex, ACTL6B-ARID1A-SMARCA4 variant"/>
</dbReference>
<dbReference type="ComplexPortal" id="CPX-1210">
    <property type="entry name" value="SWI/SNF ATP-dependent chromatin remodeling complex, ACTL6B-ARID1B-SMARCA2 variant"/>
</dbReference>
<dbReference type="ComplexPortal" id="CPX-1211">
    <property type="entry name" value="SWI/SNF ATP-dependent chromatin remodeling complex, ACTL6B-ARID1B-SMARCA4 variant"/>
</dbReference>
<dbReference type="ComplexPortal" id="CPX-1212">
    <property type="entry name" value="Neural progenitor-specific SWI/SNF ATP-dependent chromatin remodeling complex, ARID1A-SMARCA4 variant"/>
</dbReference>
<dbReference type="ComplexPortal" id="CPX-1213">
    <property type="entry name" value="Neural progenitor-specific SWI/SNF ATP-dependent chromatin remodeling complex, ARID1B-SMARCA2 variant"/>
</dbReference>
<dbReference type="ComplexPortal" id="CPX-1215">
    <property type="entry name" value="Neural progenitor-specific SWI/SNF ATP-dependent chromatin remodeling complex, ARID1B-SMARCA4 variant"/>
</dbReference>
<dbReference type="ComplexPortal" id="CPX-1216">
    <property type="entry name" value="Neuron-specific SWI/SNF ATP-dependent chromatin remodeling complex, ARID1A-SMARCA4 variant"/>
</dbReference>
<dbReference type="ComplexPortal" id="CPX-1217">
    <property type="entry name" value="Neuron-specific SWI/SNF ATP-dependent chromatin remodeling complex, ARID1B-SMARCA2 variant"/>
</dbReference>
<dbReference type="ComplexPortal" id="CPX-1218">
    <property type="entry name" value="Neuron-specific SWI/SNF ATP-dependent chromatin remodeling complex, ARID1B-SMARCA4 variant"/>
</dbReference>
<dbReference type="ComplexPortal" id="CPX-1222">
    <property type="entry name" value="Muscle cell-specific SWI/SNF ATP-dependent chromatin remodeling complex, ACTL6A-ARID1A-SMARCA4 variant"/>
</dbReference>
<dbReference type="ComplexPortal" id="CPX-1223">
    <property type="entry name" value="Muscle cell-specific SWI/SNF ATP-dependent chromatin remodeling complex, ACTL6A-ARID1B-SMARCA2 variant"/>
</dbReference>
<dbReference type="ComplexPortal" id="CPX-1224">
    <property type="entry name" value="Muscle cell-specific SWI/SNF ATP-dependent chromatin remodeling complex, ACTL6A-ARID1B-SMARCA4 variant"/>
</dbReference>
<dbReference type="ComplexPortal" id="CPX-1225">
    <property type="entry name" value="Muscle cell-specific SWI/SNF ATP-dependent chromatin remodeling complex, ACTL6B-ARID1A-SMARCA2 variant"/>
</dbReference>
<dbReference type="ComplexPortal" id="CPX-1226">
    <property type="entry name" value="Muscle cell-specific SWI/SNF ATP-dependent chromatin remodeling complex, ACTL6B-ARID1A-SMARCA4 variant"/>
</dbReference>
<dbReference type="ComplexPortal" id="CPX-1227">
    <property type="entry name" value="Muscle cell-specific SWI/SNF ATP-dependent chromatin remodeling complex, ACTL6B-ARID1B-SMARCA2 variant"/>
</dbReference>
<dbReference type="ComplexPortal" id="CPX-1228">
    <property type="entry name" value="Muscle cell-specific SWI/SNF ATP-dependent chromatin remodeling complex, ACTL6B-ARID1B-SMARCA4 variant"/>
</dbReference>
<dbReference type="ComplexPortal" id="CPX-4084">
    <property type="entry name" value="GBAF (SWI/SNF) ATP-dependent chromatin remodeling complex, ACTL6A-BICRA-SMARCA2 variant"/>
</dbReference>
<dbReference type="ComplexPortal" id="CPX-4203">
    <property type="entry name" value="GBAF (SWI/SNF) ATP-dependent chromatin remodeling complex, ACTL6A-BICRAL-SMARCA2 variant"/>
</dbReference>
<dbReference type="ComplexPortal" id="CPX-4206">
    <property type="entry name" value="GBAF (SWI/SNF) ATP-dependent chromatin remodeling complex, ACTL6A-BICRA-SMARCA4 variant"/>
</dbReference>
<dbReference type="ComplexPortal" id="CPX-4207">
    <property type="entry name" value="GBAF (SWI/SNF) ATP-dependent chromatin remodeling complex, ACTL6A-BICRAL-SMARCA4 variant"/>
</dbReference>
<dbReference type="ComplexPortal" id="CPX-4223">
    <property type="entry name" value="GBAF (SWI/SNF) ATP-dependent chromatin remodeling complex, ACTL6B-BICRA-SMARCA2 variant"/>
</dbReference>
<dbReference type="ComplexPortal" id="CPX-4224">
    <property type="entry name" value="GBAF (SWI/SNF) ATP-dependent chromatin remodeling complex, ACTL6B-BICRAL-SMARCA2 variant"/>
</dbReference>
<dbReference type="ComplexPortal" id="CPX-4225">
    <property type="entry name" value="GBAF (SWI/SNF) ATP-dependent chromatin remodeling complex, ACTL6B-BICRA-SMARCA4 variant"/>
</dbReference>
<dbReference type="ComplexPortal" id="CPX-4226">
    <property type="entry name" value="GBAF (SWI/SNF) ATP-dependent chromatin remodeling complex, ACTL6B-BICRAL-SMARCA4 variant"/>
</dbReference>
<dbReference type="CORUM" id="Q92922"/>
<dbReference type="DIP" id="DIP-27545N"/>
<dbReference type="DIP" id="DIP-33044N"/>
<dbReference type="FunCoup" id="Q92922">
    <property type="interactions" value="3572"/>
</dbReference>
<dbReference type="IntAct" id="Q92922">
    <property type="interactions" value="148"/>
</dbReference>
<dbReference type="MINT" id="Q92922"/>
<dbReference type="STRING" id="9606.ENSP00000254480"/>
<dbReference type="GlyGen" id="Q92922">
    <property type="glycosylation" value="7 sites, 2 N-linked glycans (2 sites), 1 O-linked glycan (1 site)"/>
</dbReference>
<dbReference type="iPTMnet" id="Q92922"/>
<dbReference type="MetOSite" id="Q92922"/>
<dbReference type="PhosphoSitePlus" id="Q92922"/>
<dbReference type="SwissPalm" id="Q92922"/>
<dbReference type="BioMuta" id="SMARCC1"/>
<dbReference type="DMDM" id="209572723"/>
<dbReference type="jPOST" id="Q92922"/>
<dbReference type="MassIVE" id="Q92922"/>
<dbReference type="PaxDb" id="9606-ENSP00000254480"/>
<dbReference type="PeptideAtlas" id="Q92922"/>
<dbReference type="ProteomicsDB" id="75605"/>
<dbReference type="Pumba" id="Q92922"/>
<dbReference type="Antibodypedia" id="3168">
    <property type="antibodies" value="250 antibodies from 37 providers"/>
</dbReference>
<dbReference type="DNASU" id="6599"/>
<dbReference type="Ensembl" id="ENST00000254480.10">
    <property type="protein sequence ID" value="ENSP00000254480.5"/>
    <property type="gene ID" value="ENSG00000173473.11"/>
</dbReference>
<dbReference type="GeneID" id="6599"/>
<dbReference type="KEGG" id="hsa:6599"/>
<dbReference type="MANE-Select" id="ENST00000254480.10">
    <property type="protein sequence ID" value="ENSP00000254480.5"/>
    <property type="RefSeq nucleotide sequence ID" value="NM_003074.4"/>
    <property type="RefSeq protein sequence ID" value="NP_003065.3"/>
</dbReference>
<dbReference type="UCSC" id="uc003crq.3">
    <property type="organism name" value="human"/>
</dbReference>
<dbReference type="AGR" id="HGNC:11104"/>
<dbReference type="CTD" id="6599"/>
<dbReference type="DisGeNET" id="6599"/>
<dbReference type="GeneCards" id="SMARCC1"/>
<dbReference type="HGNC" id="HGNC:11104">
    <property type="gene designation" value="SMARCC1"/>
</dbReference>
<dbReference type="HPA" id="ENSG00000173473">
    <property type="expression patterns" value="Low tissue specificity"/>
</dbReference>
<dbReference type="MalaCards" id="SMARCC1"/>
<dbReference type="MIM" id="601732">
    <property type="type" value="gene"/>
</dbReference>
<dbReference type="MIM" id="620241">
    <property type="type" value="phenotype"/>
</dbReference>
<dbReference type="neXtProt" id="NX_Q92922"/>
<dbReference type="OpenTargets" id="ENSG00000173473"/>
<dbReference type="PharmGKB" id="PA35954"/>
<dbReference type="VEuPathDB" id="HostDB:ENSG00000173473"/>
<dbReference type="eggNOG" id="KOG1279">
    <property type="taxonomic scope" value="Eukaryota"/>
</dbReference>
<dbReference type="GeneTree" id="ENSGT00940000156347"/>
<dbReference type="HOGENOM" id="CLU_004447_0_1_1"/>
<dbReference type="InParanoid" id="Q92922"/>
<dbReference type="OMA" id="TIDMPDP"/>
<dbReference type="OrthoDB" id="118550at2759"/>
<dbReference type="PAN-GO" id="Q92922">
    <property type="GO annotations" value="5 GO annotations based on evolutionary models"/>
</dbReference>
<dbReference type="PhylomeDB" id="Q92922"/>
<dbReference type="TreeFam" id="TF314710"/>
<dbReference type="PathwayCommons" id="Q92922"/>
<dbReference type="Reactome" id="R-HSA-3214858">
    <property type="pathway name" value="RMTs methylate histone arginines"/>
</dbReference>
<dbReference type="Reactome" id="R-HSA-8939243">
    <property type="pathway name" value="RUNX1 interacts with co-factors whose precise effect on RUNX1 targets is not known"/>
</dbReference>
<dbReference type="Reactome" id="R-HSA-9824585">
    <property type="pathway name" value="Regulation of MITF-M-dependent genes involved in pigmentation"/>
</dbReference>
<dbReference type="Reactome" id="R-HSA-9845323">
    <property type="pathway name" value="Regulation of endogenous retroelements by Piwi-interacting RNAs (piRNAs)"/>
</dbReference>
<dbReference type="SignaLink" id="Q92922"/>
<dbReference type="SIGNOR" id="Q92922"/>
<dbReference type="BioGRID-ORCS" id="6599">
    <property type="hits" value="71 hits in 1183 CRISPR screens"/>
</dbReference>
<dbReference type="CD-CODE" id="4749EA78">
    <property type="entry name" value="cBAF condensate"/>
</dbReference>
<dbReference type="ChiTaRS" id="SMARCC1">
    <property type="organism name" value="human"/>
</dbReference>
<dbReference type="EvolutionaryTrace" id="Q92922"/>
<dbReference type="GeneWiki" id="SMARCC1"/>
<dbReference type="GenomeRNAi" id="6599"/>
<dbReference type="Pharos" id="Q92922">
    <property type="development level" value="Tbio"/>
</dbReference>
<dbReference type="PRO" id="PR:Q92922"/>
<dbReference type="Proteomes" id="UP000005640">
    <property type="component" value="Chromosome 3"/>
</dbReference>
<dbReference type="RNAct" id="Q92922">
    <property type="molecule type" value="protein"/>
</dbReference>
<dbReference type="Bgee" id="ENSG00000173473">
    <property type="expression patterns" value="Expressed in ventricular zone and 215 other cell types or tissues"/>
</dbReference>
<dbReference type="ExpressionAtlas" id="Q92922">
    <property type="expression patterns" value="baseline and differential"/>
</dbReference>
<dbReference type="GO" id="GO:0035060">
    <property type="term" value="C:brahma complex"/>
    <property type="evidence" value="ECO:0000303"/>
    <property type="project" value="ComplexPortal"/>
</dbReference>
<dbReference type="GO" id="GO:0000785">
    <property type="term" value="C:chromatin"/>
    <property type="evidence" value="ECO:0007005"/>
    <property type="project" value="UniProtKB"/>
</dbReference>
<dbReference type="GO" id="GO:0005737">
    <property type="term" value="C:cytoplasm"/>
    <property type="evidence" value="ECO:0000314"/>
    <property type="project" value="UniProtKB"/>
</dbReference>
<dbReference type="GO" id="GO:0140288">
    <property type="term" value="C:GBAF complex"/>
    <property type="evidence" value="ECO:0000303"/>
    <property type="project" value="ComplexPortal"/>
</dbReference>
<dbReference type="GO" id="GO:0000776">
    <property type="term" value="C:kinetochore"/>
    <property type="evidence" value="ECO:0000303"/>
    <property type="project" value="ComplexPortal"/>
</dbReference>
<dbReference type="GO" id="GO:0001673">
    <property type="term" value="C:male germ cell nucleus"/>
    <property type="evidence" value="ECO:0007669"/>
    <property type="project" value="Ensembl"/>
</dbReference>
<dbReference type="GO" id="GO:0071565">
    <property type="term" value="C:nBAF complex"/>
    <property type="evidence" value="ECO:0000250"/>
    <property type="project" value="UniProtKB"/>
</dbReference>
<dbReference type="GO" id="GO:0071564">
    <property type="term" value="C:npBAF complex"/>
    <property type="evidence" value="ECO:0000250"/>
    <property type="project" value="UniProtKB"/>
</dbReference>
<dbReference type="GO" id="GO:0016363">
    <property type="term" value="C:nuclear matrix"/>
    <property type="evidence" value="ECO:0000303"/>
    <property type="project" value="ComplexPortal"/>
</dbReference>
<dbReference type="GO" id="GO:0005654">
    <property type="term" value="C:nucleoplasm"/>
    <property type="evidence" value="ECO:0000314"/>
    <property type="project" value="HPA"/>
</dbReference>
<dbReference type="GO" id="GO:0005634">
    <property type="term" value="C:nucleus"/>
    <property type="evidence" value="ECO:0000314"/>
    <property type="project" value="UniProtKB"/>
</dbReference>
<dbReference type="GO" id="GO:0032991">
    <property type="term" value="C:protein-containing complex"/>
    <property type="evidence" value="ECO:0007005"/>
    <property type="project" value="UniProtKB"/>
</dbReference>
<dbReference type="GO" id="GO:0016586">
    <property type="term" value="C:RSC-type complex"/>
    <property type="evidence" value="ECO:0000303"/>
    <property type="project" value="ComplexPortal"/>
</dbReference>
<dbReference type="GO" id="GO:0016514">
    <property type="term" value="C:SWI/SNF complex"/>
    <property type="evidence" value="ECO:0000314"/>
    <property type="project" value="UniProtKB"/>
</dbReference>
<dbReference type="GO" id="GO:0001741">
    <property type="term" value="C:XY body"/>
    <property type="evidence" value="ECO:0007669"/>
    <property type="project" value="Ensembl"/>
</dbReference>
<dbReference type="GO" id="GO:0003682">
    <property type="term" value="F:chromatin binding"/>
    <property type="evidence" value="ECO:0007669"/>
    <property type="project" value="Ensembl"/>
</dbReference>
<dbReference type="GO" id="GO:0042393">
    <property type="term" value="F:histone binding"/>
    <property type="evidence" value="ECO:0000318"/>
    <property type="project" value="GO_Central"/>
</dbReference>
<dbReference type="GO" id="GO:0003713">
    <property type="term" value="F:transcription coactivator activity"/>
    <property type="evidence" value="ECO:0000303"/>
    <property type="project" value="BHF-UCL"/>
</dbReference>
<dbReference type="GO" id="GO:0009887">
    <property type="term" value="P:animal organ morphogenesis"/>
    <property type="evidence" value="ECO:0007669"/>
    <property type="project" value="Ensembl"/>
</dbReference>
<dbReference type="GO" id="GO:0006338">
    <property type="term" value="P:chromatin remodeling"/>
    <property type="evidence" value="ECO:0000314"/>
    <property type="project" value="UniProtKB"/>
</dbReference>
<dbReference type="GO" id="GO:0008286">
    <property type="term" value="P:insulin receptor signaling pathway"/>
    <property type="evidence" value="ECO:0007669"/>
    <property type="project" value="Ensembl"/>
</dbReference>
<dbReference type="GO" id="GO:0045596">
    <property type="term" value="P:negative regulation of cell differentiation"/>
    <property type="evidence" value="ECO:0000303"/>
    <property type="project" value="ComplexPortal"/>
</dbReference>
<dbReference type="GO" id="GO:0032435">
    <property type="term" value="P:negative regulation of proteasomal ubiquitin-dependent protein catabolic process"/>
    <property type="evidence" value="ECO:0007669"/>
    <property type="project" value="Ensembl"/>
</dbReference>
<dbReference type="GO" id="GO:0007399">
    <property type="term" value="P:nervous system development"/>
    <property type="evidence" value="ECO:0007669"/>
    <property type="project" value="UniProtKB-KW"/>
</dbReference>
<dbReference type="GO" id="GO:0006337">
    <property type="term" value="P:nucleosome disassembly"/>
    <property type="evidence" value="ECO:0000314"/>
    <property type="project" value="BHF-UCL"/>
</dbReference>
<dbReference type="GO" id="GO:0045597">
    <property type="term" value="P:positive regulation of cell differentiation"/>
    <property type="evidence" value="ECO:0000303"/>
    <property type="project" value="ComplexPortal"/>
</dbReference>
<dbReference type="GO" id="GO:0008284">
    <property type="term" value="P:positive regulation of cell population proliferation"/>
    <property type="evidence" value="ECO:0000303"/>
    <property type="project" value="ComplexPortal"/>
</dbReference>
<dbReference type="GO" id="GO:0045893">
    <property type="term" value="P:positive regulation of DNA-templated transcription"/>
    <property type="evidence" value="ECO:0000314"/>
    <property type="project" value="UniProtKB"/>
</dbReference>
<dbReference type="GO" id="GO:2000781">
    <property type="term" value="P:positive regulation of double-strand break repair"/>
    <property type="evidence" value="ECO:0000303"/>
    <property type="project" value="ComplexPortal"/>
</dbReference>
<dbReference type="GO" id="GO:0045663">
    <property type="term" value="P:positive regulation of myoblast differentiation"/>
    <property type="evidence" value="ECO:0000303"/>
    <property type="project" value="ComplexPortal"/>
</dbReference>
<dbReference type="GO" id="GO:1902459">
    <property type="term" value="P:positive regulation of stem cell population maintenance"/>
    <property type="evidence" value="ECO:0000303"/>
    <property type="project" value="ComplexPortal"/>
</dbReference>
<dbReference type="GO" id="GO:0045582">
    <property type="term" value="P:positive regulation of T cell differentiation"/>
    <property type="evidence" value="ECO:0000303"/>
    <property type="project" value="ComplexPortal"/>
</dbReference>
<dbReference type="GO" id="GO:0045944">
    <property type="term" value="P:positive regulation of transcription by RNA polymerase II"/>
    <property type="evidence" value="ECO:0007669"/>
    <property type="project" value="Ensembl"/>
</dbReference>
<dbReference type="GO" id="GO:0030850">
    <property type="term" value="P:prostate gland development"/>
    <property type="evidence" value="ECO:0007669"/>
    <property type="project" value="Ensembl"/>
</dbReference>
<dbReference type="GO" id="GO:0070316">
    <property type="term" value="P:regulation of G0 to G1 transition"/>
    <property type="evidence" value="ECO:0000303"/>
    <property type="project" value="ComplexPortal"/>
</dbReference>
<dbReference type="GO" id="GO:2000045">
    <property type="term" value="P:regulation of G1/S transition of mitotic cell cycle"/>
    <property type="evidence" value="ECO:0000303"/>
    <property type="project" value="ComplexPortal"/>
</dbReference>
<dbReference type="GO" id="GO:0030071">
    <property type="term" value="P:regulation of mitotic metaphase/anaphase transition"/>
    <property type="evidence" value="ECO:0000303"/>
    <property type="project" value="ComplexPortal"/>
</dbReference>
<dbReference type="GO" id="GO:2000819">
    <property type="term" value="P:regulation of nucleotide-excision repair"/>
    <property type="evidence" value="ECO:0000303"/>
    <property type="project" value="ComplexPortal"/>
</dbReference>
<dbReference type="GO" id="GO:0006357">
    <property type="term" value="P:regulation of transcription by RNA polymerase II"/>
    <property type="evidence" value="ECO:0000303"/>
    <property type="project" value="BHF-UCL"/>
</dbReference>
<dbReference type="FunFam" id="1.10.10.60:FF:000014">
    <property type="entry name" value="SWI/SNF complex subunit SMARCC2 isoform C"/>
    <property type="match status" value="1"/>
</dbReference>
<dbReference type="FunFam" id="1.10.10.10:FF:000020">
    <property type="entry name" value="SWI/SNF complex subunit SMARCC2 isoform c"/>
    <property type="match status" value="1"/>
</dbReference>
<dbReference type="Gene3D" id="1.10.10.60">
    <property type="entry name" value="Homeodomain-like"/>
    <property type="match status" value="1"/>
</dbReference>
<dbReference type="Gene3D" id="1.10.10.10">
    <property type="entry name" value="Winged helix-like DNA-binding domain superfamily/Winged helix DNA-binding domain"/>
    <property type="match status" value="1"/>
</dbReference>
<dbReference type="InterPro" id="IPR036420">
    <property type="entry name" value="BRCT_dom_sf"/>
</dbReference>
<dbReference type="InterPro" id="IPR000953">
    <property type="entry name" value="Chromo/chromo_shadow_dom"/>
</dbReference>
<dbReference type="InterPro" id="IPR009057">
    <property type="entry name" value="Homeodomain-like_sf"/>
</dbReference>
<dbReference type="InterPro" id="IPR049898">
    <property type="entry name" value="MARR_BRCT_CHROMO"/>
</dbReference>
<dbReference type="InterPro" id="IPR001005">
    <property type="entry name" value="SANT/Myb"/>
</dbReference>
<dbReference type="InterPro" id="IPR017884">
    <property type="entry name" value="SANT_dom"/>
</dbReference>
<dbReference type="InterPro" id="IPR032451">
    <property type="entry name" value="SMARCC_C"/>
</dbReference>
<dbReference type="InterPro" id="IPR032450">
    <property type="entry name" value="SMARCC_N"/>
</dbReference>
<dbReference type="InterPro" id="IPR007526">
    <property type="entry name" value="SWIRM"/>
</dbReference>
<dbReference type="InterPro" id="IPR032448">
    <property type="entry name" value="SWIRM-assoc"/>
</dbReference>
<dbReference type="InterPro" id="IPR036388">
    <property type="entry name" value="WH-like_DNA-bd_sf"/>
</dbReference>
<dbReference type="PANTHER" id="PTHR15381:SF1">
    <property type="entry name" value="CHONDROITIN SULFATE PROTEOGLYCAN 5"/>
    <property type="match status" value="1"/>
</dbReference>
<dbReference type="PANTHER" id="PTHR15381">
    <property type="entry name" value="CHONDROITIN SULFATE PROTEOGLYCAN 5 -RELATED"/>
    <property type="match status" value="1"/>
</dbReference>
<dbReference type="Pfam" id="PF00249">
    <property type="entry name" value="Myb_DNA-binding"/>
    <property type="match status" value="1"/>
</dbReference>
<dbReference type="Pfam" id="PF04433">
    <property type="entry name" value="SWIRM"/>
    <property type="match status" value="1"/>
</dbReference>
<dbReference type="Pfam" id="PF16495">
    <property type="entry name" value="SWIRM-assoc_1"/>
    <property type="match status" value="1"/>
</dbReference>
<dbReference type="Pfam" id="PF16496">
    <property type="entry name" value="SWIRM-assoc_2"/>
    <property type="match status" value="1"/>
</dbReference>
<dbReference type="Pfam" id="PF16498">
    <property type="entry name" value="SWIRM-assoc_3"/>
    <property type="match status" value="1"/>
</dbReference>
<dbReference type="SMART" id="SM00298">
    <property type="entry name" value="CHROMO"/>
    <property type="match status" value="1"/>
</dbReference>
<dbReference type="SMART" id="SM00717">
    <property type="entry name" value="SANT"/>
    <property type="match status" value="1"/>
</dbReference>
<dbReference type="SUPFAM" id="SSF52113">
    <property type="entry name" value="BRCT domain"/>
    <property type="match status" value="1"/>
</dbReference>
<dbReference type="SUPFAM" id="SSF46689">
    <property type="entry name" value="Homeodomain-like"/>
    <property type="match status" value="2"/>
</dbReference>
<dbReference type="PROSITE" id="PS52032">
    <property type="entry name" value="MARR_BRCT_CHROMO"/>
    <property type="match status" value="1"/>
</dbReference>
<dbReference type="PROSITE" id="PS51293">
    <property type="entry name" value="SANT"/>
    <property type="match status" value="1"/>
</dbReference>
<dbReference type="PROSITE" id="PS50934">
    <property type="entry name" value="SWIRM"/>
    <property type="match status" value="1"/>
</dbReference>
<protein>
    <recommendedName>
        <fullName evidence="26">SWI/SNF complex subunit SMARCC1</fullName>
    </recommendedName>
    <alternativeName>
        <fullName>BRG1-associated factor 155</fullName>
        <shortName>BAF155</shortName>
    </alternativeName>
    <alternativeName>
        <fullName>SWI/SNF complex 155 kDa subunit</fullName>
    </alternativeName>
    <alternativeName>
        <fullName>SWI/SNF-related matrix-associated actin-dependent regulator of chromatin subfamily C member 1</fullName>
    </alternativeName>
</protein>
<accession>Q92922</accession>
<accession>Q17RS0</accession>
<accession>Q6P172</accession>
<accession>Q8IWH2</accession>
<evidence type="ECO:0000250" key="1">
    <source>
        <dbReference type="UniProtKB" id="P97496"/>
    </source>
</evidence>
<evidence type="ECO:0000255" key="2"/>
<evidence type="ECO:0000255" key="3">
    <source>
        <dbReference type="PROSITE-ProRule" id="PRU00247"/>
    </source>
</evidence>
<evidence type="ECO:0000255" key="4">
    <source>
        <dbReference type="PROSITE-ProRule" id="PRU00624"/>
    </source>
</evidence>
<evidence type="ECO:0000255" key="5">
    <source>
        <dbReference type="PROSITE-ProRule" id="PRU01376"/>
    </source>
</evidence>
<evidence type="ECO:0000256" key="6">
    <source>
        <dbReference type="SAM" id="MobiDB-lite"/>
    </source>
</evidence>
<evidence type="ECO:0000269" key="7">
    <source>
    </source>
</evidence>
<evidence type="ECO:0000269" key="8">
    <source>
    </source>
</evidence>
<evidence type="ECO:0000269" key="9">
    <source>
    </source>
</evidence>
<evidence type="ECO:0000269" key="10">
    <source>
    </source>
</evidence>
<evidence type="ECO:0000269" key="11">
    <source>
    </source>
</evidence>
<evidence type="ECO:0000269" key="12">
    <source>
    </source>
</evidence>
<evidence type="ECO:0000269" key="13">
    <source>
    </source>
</evidence>
<evidence type="ECO:0000269" key="14">
    <source>
    </source>
</evidence>
<evidence type="ECO:0000269" key="15">
    <source>
    </source>
</evidence>
<evidence type="ECO:0000269" key="16">
    <source>
    </source>
</evidence>
<evidence type="ECO:0000269" key="17">
    <source>
    </source>
</evidence>
<evidence type="ECO:0000269" key="18">
    <source>
    </source>
</evidence>
<evidence type="ECO:0000269" key="19">
    <source>
    </source>
</evidence>
<evidence type="ECO:0000269" key="20">
    <source>
    </source>
</evidence>
<evidence type="ECO:0000269" key="21">
    <source>
    </source>
</evidence>
<evidence type="ECO:0000269" key="22">
    <source>
    </source>
</evidence>
<evidence type="ECO:0000269" key="23">
    <source ref="3"/>
</evidence>
<evidence type="ECO:0000303" key="24">
    <source>
    </source>
</evidence>
<evidence type="ECO:0000303" key="25">
    <source>
    </source>
</evidence>
<evidence type="ECO:0000305" key="26"/>
<evidence type="ECO:0000312" key="27">
    <source>
        <dbReference type="HGNC" id="HGNC:11104"/>
    </source>
</evidence>
<evidence type="ECO:0007744" key="28">
    <source>
    </source>
</evidence>
<evidence type="ECO:0007744" key="29">
    <source>
    </source>
</evidence>
<evidence type="ECO:0007744" key="30">
    <source>
    </source>
</evidence>
<evidence type="ECO:0007744" key="31">
    <source>
    </source>
</evidence>
<evidence type="ECO:0007744" key="32">
    <source>
    </source>
</evidence>
<evidence type="ECO:0007744" key="33">
    <source>
    </source>
</evidence>
<evidence type="ECO:0007744" key="34">
    <source>
    </source>
</evidence>
<evidence type="ECO:0007744" key="35">
    <source>
    </source>
</evidence>
<evidence type="ECO:0007744" key="36">
    <source>
    </source>
</evidence>
<evidence type="ECO:0007744" key="37">
    <source>
    </source>
</evidence>
<evidence type="ECO:0007744" key="38">
    <source>
    </source>
</evidence>
<evidence type="ECO:0007744" key="39">
    <source>
    </source>
</evidence>
<evidence type="ECO:0007829" key="40">
    <source>
        <dbReference type="PDB" id="2YUS"/>
    </source>
</evidence>
<evidence type="ECO:0007829" key="41">
    <source>
        <dbReference type="PDB" id="5GJK"/>
    </source>
</evidence>
<evidence type="ECO:0007829" key="42">
    <source>
        <dbReference type="PDB" id="6YXO"/>
    </source>
</evidence>
<evidence type="ECO:0007829" key="43">
    <source>
        <dbReference type="PDB" id="6YXP"/>
    </source>
</evidence>
<organism>
    <name type="scientific">Homo sapiens</name>
    <name type="common">Human</name>
    <dbReference type="NCBI Taxonomy" id="9606"/>
    <lineage>
        <taxon>Eukaryota</taxon>
        <taxon>Metazoa</taxon>
        <taxon>Chordata</taxon>
        <taxon>Craniata</taxon>
        <taxon>Vertebrata</taxon>
        <taxon>Euteleostomi</taxon>
        <taxon>Mammalia</taxon>
        <taxon>Eutheria</taxon>
        <taxon>Euarchontoglires</taxon>
        <taxon>Primates</taxon>
        <taxon>Haplorrhini</taxon>
        <taxon>Catarrhini</taxon>
        <taxon>Hominidae</taxon>
        <taxon>Homo</taxon>
    </lineage>
</organism>
<comment type="function">
    <text evidence="1 7 8 16 24 25">Involved in transcriptional activation and repression of select genes by chromatin remodeling (alteration of DNA-nucleosome topology). Component of SWI/SNF chromatin remodeling complexes that carry out key enzymatic activities, changing chromatin structure by altering DNA-histone contacts within a nucleosome in an ATP-dependent manner. May stimulate the ATPase activity of the catalytic subunit of the complex (PubMed:10078207, PubMed:29374058). Belongs to the neural progenitors-specific chromatin remodeling complex (npBAF complex) and the neuron-specific chromatin remodeling complex (nBAF complex). During neural development a switch from a stem/progenitor to a postmitotic chromatin remodeling mechanism occurs as neurons exit the cell cycle and become committed to their adult state. The transition from proliferating neural stem/progenitor cells to postmitotic neurons requires a switch in subunit composition of the npBAF and nBAF complexes. As neural progenitors exit mitosis and differentiate into neurons, npBAF complexes which contain ACTL6A/BAF53A and PHF10/BAF45A, are exchanged for homologous alternative ACTL6B/BAF53B and DPF1/BAF45B or DPF3/BAF45C subunits in neuron-specific complexes (nBAF). The npBAF complex is essential for the self-renewal/proliferative capacity of the multipotent neural stem cells. The nBAF complex along with CREST plays a role regulating the activity of genes essential for dendrite growth (By similarity).</text>
</comment>
<comment type="subunit">
    <text evidence="1 9 10 11 12 13 14 15 16 18 19 22 24 25">Component of the multiprotein chromatin-remodeling complexes SWI/SNF: SWI/SNF-A (BAF), SWI/SNF-B (PBAF) and related complexes. The canonical complex contains a catalytic subunit (either SMARCA4/BRG1/BAF190A or SMARCA2/BRM/BAF190B) and at least SMARCE1, ACTL6A/BAF53, SMARCC1/BAF155, SMARCC2/BAF170, and SMARCB1/SNF5/BAF47. Other subunits specific to each of the complexes may also be present permitting several possible combinations developmentally and tissue specific (Probable). Component of the BAF complex, which includes at least actin (ACTB), ARID1A/BAF250A, ARID1B/BAF250B, SMARCA2/BRM, SMARCA4/BRG1, ACTL6A/BAF53, ACTL6B/BAF53B, SMARCE1/BAF57, SMARCC1/BAF155, SMARCC2/BAF170, SMARCB1/SNF5/INI1, and one or more SMARCD1/BAF60A, SMARCD2/BAF60B, or SMARCD3/BAF60C. In muscle cells, the BAF complex also contains DPF3 (PubMed:18765789). Component of neural progenitors-specific chromatin remodeling complex (npBAF complex) composed of at least, ARID1A/BAF250A or ARID1B/BAF250B, SMARCD1/BAF60A, SMARCD3/BAF60C, SMARCA2/BRM/BAF190B, SMARCA4/BRG1/BAF190A, SMARCB1/BAF47, SMARCC1/BAF155, SMARCE1/BAF57, SMARCC2/BAF170, PHF10/BAF45A, ACTL6A/BAF53A and actin. Component of neuron-specific chromatin remodeling complex (nBAF complex) composed of at least, ARID1A/BAF250A or ARID1B/BAF250B, SMARCD1/BAF60A, SMARCD3/BAF60C, SMARCA2/BRM/BAF190B, SMARCA4/BRG1/BAF190A, SMARCB1/BAF47, SMARCC1/BAF155, SMARCE1/BAF57, SMARCC2/BAF170, DPF1/BAF45B, DPF3/BAF45C, ACTL6B/BAF53B and actin (By similarity). Component of the SWI/SNF-B (PBAF) chromatin remodeling complex, at least composed of SMARCA4/BRG1, SMARCB1/BAF47/SNF5, ACTL6A/BAF53A or ACTL6B/BAF53B, SMARCE1/BAF57, SMARCD1/BAF60A, SMARCD2/BAF60B, perhaps SMARCD3/BAF60C, SMARCC1/BAF155, SMARCC2/BAF170, PBRM1/BAF180, ARID2/BAF200 and actin (PubMed:22952240, PubMed:26601204). Component of SWI/SNF (GBAF) subcomplex, which includes at least BICRA or BICRAL (mutually exclusive), BRD9, SS18, SMARCA2/BRM, SMARCA4/BRG1/BAF190A, ACTL6A/BAF53, SMARCC1/BAF155, and SMARCD1/BAF60A (PubMed:29374058). May also interact with the SIN3A histone deacetylase transcription repressor complex in conjunction with SMARCA2 and SMARCA4 (PubMed:11238380). The minimal complex composed of SMARCC1 and SMARCA4 seems to be able to associate with cyclin such as CCNE1 or transcription factors such as KLF1 or GATA1 (PubMed:9891079). Interacts with NR3C1 and SMARD1 (PubMed:12917342). Interacts with TRIP12; leading to disrupt interaction between TRIP12 and SMARCE1 and prevent SMARCE1 ubiquitination (PubMed:20111005). Interacts with CEBPB (when not methylated) (PubMed:20829358). Interacts with KDM6B (By similarity). Interacts with MKKS; the interaction takes place predominantly in the cytoplasm and may modulate SMARCC1 location (PubMed:28753627). Interacts with DPF2 (PubMed:28533407). Interacts with PRDM1/BLIMP1 (PubMed:32417234). Interacts with DPF3a (isoform 2 of DPF3/BAF45C) and with HDGFL2 in a DPF3a-dependent manner (PubMed:32459350).</text>
</comment>
<comment type="interaction">
    <interactant intactId="EBI-355653">
        <id>Q92922</id>
    </interactant>
    <interactant intactId="EBI-10173507">
        <id>Q6UY14-3</id>
        <label>ADAMTSL4</label>
    </interactant>
    <organismsDiffer>false</organismsDiffer>
    <experiments>6</experiments>
</comment>
<comment type="interaction">
    <interactant intactId="EBI-355653">
        <id>Q92922</id>
    </interactant>
    <interactant intactId="EBI-957042">
        <id>P50553</id>
        <label>ASCL1</label>
    </interactant>
    <organismsDiffer>false</organismsDiffer>
    <experiments>2</experiments>
</comment>
<comment type="interaction">
    <interactant intactId="EBI-355653">
        <id>Q92922</id>
    </interactant>
    <interactant intactId="EBI-2339854">
        <id>Q86X55</id>
        <label>CARM1</label>
    </interactant>
    <organismsDiffer>false</organismsDiffer>
    <experiments>4</experiments>
</comment>
<comment type="interaction">
    <interactant intactId="EBI-355653">
        <id>Q92922</id>
    </interactant>
    <interactant intactId="EBI-9038570">
        <id>P27918</id>
        <label>CFP</label>
    </interactant>
    <organismsDiffer>false</organismsDiffer>
    <experiments>3</experiments>
</comment>
<comment type="interaction">
    <interactant intactId="EBI-355653">
        <id>Q92922</id>
    </interactant>
    <interactant intactId="EBI-7062247">
        <id>Q9UHD4</id>
        <label>CIDEB</label>
    </interactant>
    <organismsDiffer>false</organismsDiffer>
    <experiments>3</experiments>
</comment>
<comment type="interaction">
    <interactant intactId="EBI-355653">
        <id>Q92922</id>
    </interactant>
    <interactant intactId="EBI-3867333">
        <id>A8MQ03</id>
        <label>CYSRT1</label>
    </interactant>
    <organismsDiffer>false</organismsDiffer>
    <experiments>3</experiments>
</comment>
<comment type="interaction">
    <interactant intactId="EBI-355653">
        <id>Q92922</id>
    </interactant>
    <interactant intactId="EBI-374781">
        <id>O76003</id>
        <label>GLRX3</label>
    </interactant>
    <organismsDiffer>false</organismsDiffer>
    <experiments>3</experiments>
</comment>
<comment type="interaction">
    <interactant intactId="EBI-355653">
        <id>Q92922</id>
    </interactant>
    <interactant intactId="EBI-10194609">
        <id>Q9H4Y5</id>
        <label>GSTO2</label>
    </interactant>
    <organismsDiffer>false</organismsDiffer>
    <experiments>3</experiments>
</comment>
<comment type="interaction">
    <interactant intactId="EBI-355653">
        <id>Q92922</id>
    </interactant>
    <interactant intactId="EBI-10241252">
        <id>Q3SY46</id>
        <label>KRTAP13-3</label>
    </interactant>
    <organismsDiffer>false</organismsDiffer>
    <experiments>3</experiments>
</comment>
<comment type="interaction">
    <interactant intactId="EBI-355653">
        <id>Q92922</id>
    </interactant>
    <interactant intactId="EBI-12196745">
        <id>Q3LHN2</id>
        <label>KRTAP19-2</label>
    </interactant>
    <organismsDiffer>false</organismsDiffer>
    <experiments>3</experiments>
</comment>
<comment type="interaction">
    <interactant intactId="EBI-355653">
        <id>Q92922</id>
    </interactant>
    <interactant intactId="EBI-18395721">
        <id>Q3LI59</id>
        <label>KRTAP21-2</label>
    </interactant>
    <organismsDiffer>false</organismsDiffer>
    <experiments>3</experiments>
</comment>
<comment type="interaction">
    <interactant intactId="EBI-355653">
        <id>Q92922</id>
    </interactant>
    <interactant intactId="EBI-3957672">
        <id>Q6PEX3</id>
        <label>KRTAP26-1</label>
    </interactant>
    <organismsDiffer>false</organismsDiffer>
    <experiments>3</experiments>
</comment>
<comment type="interaction">
    <interactant intactId="EBI-355653">
        <id>Q92922</id>
    </interactant>
    <interactant intactId="EBI-9996449">
        <id>Q9BYR8</id>
        <label>KRTAP3-1</label>
    </interactant>
    <organismsDiffer>false</organismsDiffer>
    <experiments>3</experiments>
</comment>
<comment type="interaction">
    <interactant intactId="EBI-355653">
        <id>Q92922</id>
    </interactant>
    <interactant intactId="EBI-751260">
        <id>Q9BYR7</id>
        <label>KRTAP3-2</label>
    </interactant>
    <organismsDiffer>false</organismsDiffer>
    <experiments>3</experiments>
</comment>
<comment type="interaction">
    <interactant intactId="EBI-355653">
        <id>Q92922</id>
    </interactant>
    <interactant intactId="EBI-3957694">
        <id>Q9BYR6</id>
        <label>KRTAP3-3</label>
    </interactant>
    <organismsDiffer>false</organismsDiffer>
    <experiments>3</experiments>
</comment>
<comment type="interaction">
    <interactant intactId="EBI-355653">
        <id>Q92922</id>
    </interactant>
    <interactant intactId="EBI-12111050">
        <id>Q3LI64</id>
        <label>KRTAP6-1</label>
    </interactant>
    <organismsDiffer>false</organismsDiffer>
    <experiments>3</experiments>
</comment>
<comment type="interaction">
    <interactant intactId="EBI-355653">
        <id>Q92922</id>
    </interactant>
    <interactant intactId="EBI-11962084">
        <id>Q3LI66</id>
        <label>KRTAP6-2</label>
    </interactant>
    <organismsDiffer>false</organismsDiffer>
    <experiments>3</experiments>
</comment>
<comment type="interaction">
    <interactant intactId="EBI-355653">
        <id>Q92922</id>
    </interactant>
    <interactant intactId="EBI-22311199">
        <id>Q3LI67</id>
        <label>KRTAP6-3</label>
    </interactant>
    <organismsDiffer>false</organismsDiffer>
    <experiments>3</experiments>
</comment>
<comment type="interaction">
    <interactant intactId="EBI-355653">
        <id>Q92922</id>
    </interactant>
    <interactant intactId="EBI-18394498">
        <id>Q8IUC3</id>
        <label>KRTAP7-1</label>
    </interactant>
    <organismsDiffer>false</organismsDiffer>
    <experiments>3</experiments>
</comment>
<comment type="interaction">
    <interactant intactId="EBI-355653">
        <id>Q92922</id>
    </interactant>
    <interactant intactId="EBI-18273118">
        <id>Q9P2M1</id>
        <label>LRP2BP</label>
    </interactant>
    <organismsDiffer>false</organismsDiffer>
    <experiments>3</experiments>
</comment>
<comment type="interaction">
    <interactant intactId="EBI-355653">
        <id>Q92922</id>
    </interactant>
    <interactant intactId="EBI-740446">
        <id>P32242</id>
        <label>OTX1</label>
    </interactant>
    <organismsDiffer>false</organismsDiffer>
    <experiments>3</experiments>
</comment>
<comment type="interaction">
    <interactant intactId="EBI-355653">
        <id>Q92922</id>
    </interactant>
    <interactant intactId="EBI-740019">
        <id>O15162</id>
        <label>PLSCR1</label>
    </interactant>
    <organismsDiffer>false</organismsDiffer>
    <experiments>3</experiments>
</comment>
<comment type="interaction">
    <interactant intactId="EBI-355653">
        <id>Q92922</id>
    </interactant>
    <interactant intactId="EBI-12906508">
        <id>O43314-2</id>
        <label>PPIP5K2</label>
    </interactant>
    <organismsDiffer>false</organismsDiffer>
    <experiments>3</experiments>
</comment>
<comment type="interaction">
    <interactant intactId="EBI-355653">
        <id>Q92922</id>
    </interactant>
    <interactant intactId="EBI-2860297">
        <id>Q03431</id>
        <label>PTH1R</label>
    </interactant>
    <organismsDiffer>false</organismsDiffer>
    <experiments>3</experiments>
</comment>
<comment type="interaction">
    <interactant intactId="EBI-355653">
        <id>Q92922</id>
    </interactant>
    <interactant intactId="EBI-357837">
        <id>Q01201</id>
        <label>RELB</label>
    </interactant>
    <organismsDiffer>false</organismsDiffer>
    <experiments>2</experiments>
</comment>
<comment type="interaction">
    <interactant intactId="EBI-355653">
        <id>Q92922</id>
    </interactant>
    <interactant intactId="EBI-12806032">
        <id>Q16348</id>
        <label>SLC15A2</label>
    </interactant>
    <organismsDiffer>false</organismsDiffer>
    <experiments>3</experiments>
</comment>
<comment type="interaction">
    <interactant intactId="EBI-355653">
        <id>Q92922</id>
    </interactant>
    <interactant intactId="EBI-302489">
        <id>P51532</id>
        <label>SMARCA4</label>
    </interactant>
    <organismsDiffer>false</organismsDiffer>
    <experiments>29</experiments>
</comment>
<comment type="interaction">
    <interactant intactId="EBI-355653">
        <id>Q92922</id>
    </interactant>
    <interactant intactId="EBI-358489">
        <id>Q96GM5</id>
        <label>SMARCD1</label>
    </interactant>
    <organismsDiffer>false</organismsDiffer>
    <experiments>13</experiments>
</comment>
<comment type="interaction">
    <interactant intactId="EBI-355653">
        <id>Q92922</id>
    </interactant>
    <interactant intactId="EBI-10696971">
        <id>Q7Z6I5</id>
        <label>SPATA12</label>
    </interactant>
    <organismsDiffer>false</organismsDiffer>
    <experiments>3</experiments>
</comment>
<comment type="interaction">
    <interactant intactId="EBI-355653">
        <id>Q92922</id>
    </interactant>
    <interactant intactId="EBI-5235829">
        <id>Q8IWZ5</id>
        <label>TRIM42</label>
    </interactant>
    <organismsDiffer>false</organismsDiffer>
    <experiments>3</experiments>
</comment>
<comment type="interaction">
    <interactant intactId="EBI-355653">
        <id>Q92922</id>
    </interactant>
    <interactant intactId="EBI-12068150">
        <id>Q6NVU6</id>
        <label>UFSP1</label>
    </interactant>
    <organismsDiffer>false</organismsDiffer>
    <experiments>3</experiments>
</comment>
<comment type="interaction">
    <interactant intactId="EBI-355653">
        <id>Q92922</id>
    </interactant>
    <interactant intactId="EBI-11957216">
        <id>A8MV65-2</id>
        <label>VGLL3</label>
    </interactant>
    <organismsDiffer>false</organismsDiffer>
    <experiments>3</experiments>
</comment>
<comment type="interaction">
    <interactant intactId="EBI-355653">
        <id>Q92922</id>
    </interactant>
    <interactant intactId="EBI-745520">
        <id>Q9P0T4</id>
        <label>ZNF581</label>
    </interactant>
    <organismsDiffer>false</organismsDiffer>
    <experiments>3</experiments>
</comment>
<comment type="subcellular location">
    <subcellularLocation>
        <location evidence="15">Nucleus</location>
    </subcellularLocation>
    <subcellularLocation>
        <location evidence="15">Cytoplasm</location>
    </subcellularLocation>
</comment>
<comment type="tissue specificity">
    <text>Expressed in brain, heart, muscle, placenta, lung, liver, muscle, kidney and pancreas.</text>
</comment>
<comment type="PTM">
    <text evidence="21">Phosphorylated on undefined residues at the G2/M transition by ERK1 and other kinases. This may contribute to cell cycle specific inactivation of remodeling complexes containing the phosphorylated protein.</text>
</comment>
<comment type="disease" evidence="17 20">
    <disease id="DI-06606">
        <name>Hydrocephalus, congenital, 5</name>
        <acronym>HYC5</acronym>
        <description>A form of congenital hydrocephalus, a disease characterized by in utero onset of enlarged ventricles due to accumulation of ventricular cerebrospinal fluid. HYC5 is an autosomal dominant form with incomplete penetrance and variable expressivity, associated with aqueductal stenosis apparent from birth. Some patients may have neurodevelopmental delay, seizures, or structural brain abnormalities.</description>
        <dbReference type="MIM" id="620241"/>
    </disease>
    <text>Disease susceptibility is associated with variants affecting the gene represented in this entry.</text>
</comment>
<comment type="similarity">
    <text evidence="26">Belongs to the SMARCC family.</text>
</comment>
<comment type="sequence caution" evidence="26">
    <conflict type="miscellaneous discrepancy">
        <sequence resource="EMBL-CDS" id="AAH39843"/>
    </conflict>
    <text>Contaminating sequence. Potential poly-A sequence.</text>
</comment>
<comment type="sequence caution" evidence="26">
    <conflict type="miscellaneous discrepancy">
        <sequence resource="EMBL-CDS" id="AAH65253"/>
    </conflict>
    <text>Contaminating sequence. Potential poly-A sequence.</text>
</comment>
<name>SMRC1_HUMAN</name>
<sequence length="1105" mass="122867">MAAAAGGGGPGTAVGATGSGIAAAAAGLAVYRRKDGGPATKFWESPETVSQLDSVRVWLGKHYKKYVHADAPTNKTLAGLVVQLLQFQEDAFGKHVTNPAFTKLPAKCFMDFKAGGALCHILGAAYKYKNEQGWRRFDLQNPSRMDRNVEMFMNIEKTLVQNNCLTRPNIYLIPDIDLKLANKLKDIIKRHQGTFTDEKSKASHHIYPYSSSQDDEEWLRPVMRKEKQVLVHWGFYPDSYDTWVHSNDVDAEIEDPPIPEKPWKVHVKWILDTDIFNEWMNEEDYEVDENRKPVSFRQRISTKNEEPVRSPERRDRKASANARKRKHSPSPPPPTPTESRKKSGKKGQASLYGKRRSQKEEDEQEDLTKDMEDPTPVPNIEEVVLPKNVNLKKDSENTPVKGGTVADLDEQDEETVTAGGKEDEDPAKGDQSRSVDLGEDNVTEQTNHIIIPSYASWFDYNCIHVIERRALPEFFNGKNKSKTPEIYLAYRNFMIDTYRLNPQEYLTSTACRRNLTGDVCAVMRVHAFLEQWGLVNYQVDPESRPMAMGPPPTPHFNVLADTPSGLVPLHLRSPQVPAAQQMLNFPEKNKEKPVDLQNFGLRTDIYSKKTLAKSKGASAGREWTEQETLLLLEALEMYKDDWNKVSEHVGSRTQDECILHFLRLPIEDPYLENSDASLGPLAYQPVPFSQSGNPVMSTVAFLASVVDPRVASAAAKAALEEFSRVREEVPLELVEAHVKKVQEAARASGKVDPTYGLESSCIAGTGPDEPEKLEGAEEEKMEADPDGQQPEKAENKVENETDEGDKAQDGENEKNSEKEQDSEVSEDTKSEEKETEENKELTDTCKERESDTGKKKVEHEISEGNVATAAAAALASAATKAKHLAAVEERKIKSLVALLVETQMKKLEIKLRHFEELETIMDREKEALEQQRQQLLTERQNFHMEQLKYAELRARQQMEQQQHGQNPQQAHQHSGGPGLAPLGAAGHPGMMPHQQPPPYPLMHHQMPPPHPPQPGQIPGPGSMMPGQHMPGRMIPTVAANIHPSGSGPTPPGMPPMPGNILGPRVPLTAPNGMYPPPPQQQPPPPPPADGVPPPPAPGPPASAAP</sequence>
<gene>
    <name evidence="27" type="primary">SMARCC1</name>
    <name type="synonym">BAF155</name>
</gene>
<proteinExistence type="evidence at protein level"/>
<reference key="1">
    <citation type="journal article" date="1996" name="Genes Dev.">
        <title>Diversity and specialization of mammalian SWI/SNF complexes.</title>
        <authorList>
            <person name="Wang W."/>
            <person name="Xue Y."/>
            <person name="Zhou S."/>
            <person name="Kuo A."/>
            <person name="Cairns B.R."/>
            <person name="Crabtree G.R."/>
        </authorList>
    </citation>
    <scope>NUCLEOTIDE SEQUENCE [MRNA]</scope>
</reference>
<reference key="2">
    <citation type="journal article" date="2004" name="Genome Res.">
        <title>The status, quality, and expansion of the NIH full-length cDNA project: the Mammalian Gene Collection (MGC).</title>
        <authorList>
            <consortium name="The MGC Project Team"/>
        </authorList>
    </citation>
    <scope>NUCLEOTIDE SEQUENCE [LARGE SCALE MRNA]</scope>
    <source>
        <tissue>Brain</tissue>
        <tissue>Eye</tissue>
        <tissue>Testis</tissue>
    </source>
</reference>
<reference key="3">
    <citation type="submission" date="2007-07" db="UniProtKB">
        <authorList>
            <person name="Bienvenut W.V."/>
            <person name="Matallanas D."/>
            <person name="Cooper W.N."/>
            <person name="Kolch W."/>
        </authorList>
    </citation>
    <scope>PROTEIN SEQUENCE OF 2-32; 470-478; 483-491; 591-602; 653-663; 717-724 AND 894-905</scope>
    <scope>CLEAVAGE OF INITIATOR METHIONINE</scope>
    <scope>ACETYLATION AT ALA-2</scope>
    <scope>IDENTIFICATION BY MASS SPECTROMETRY</scope>
    <source>
        <tissue>Mammary carcinoma</tissue>
    </source>
</reference>
<reference key="4">
    <citation type="journal article" date="1998" name="Genes Dev.">
        <title>Mitotic inactivation of a human SWI/SNF chromatin remodeling complex.</title>
        <authorList>
            <person name="Sif S."/>
            <person name="Stukenberg P.T."/>
            <person name="Kirschner M.W."/>
            <person name="Kingston R.E."/>
        </authorList>
    </citation>
    <scope>PHOSPHORYLATION AT THE G2/M TRANSITION</scope>
</reference>
<reference key="5">
    <citation type="journal article" date="2004" name="Anal. Chem.">
        <title>Robust phosphoproteomic profiling of tyrosine phosphorylation sites from human T cells using immobilized metal affinity chromatography and tandem mass spectrometry.</title>
        <authorList>
            <person name="Brill L.M."/>
            <person name="Salomon A.R."/>
            <person name="Ficarro S.B."/>
            <person name="Mukherji M."/>
            <person name="Stettler-Gill M."/>
            <person name="Peters E.C."/>
        </authorList>
    </citation>
    <scope>IDENTIFICATION BY MASS SPECTROMETRY [LARGE SCALE ANALYSIS]</scope>
    <source>
        <tissue>Leukemic T-cell</tissue>
    </source>
</reference>
<reference key="6">
    <citation type="journal article" date="2006" name="Cell">
        <title>Global, in vivo, and site-specific phosphorylation dynamics in signaling networks.</title>
        <authorList>
            <person name="Olsen J.V."/>
            <person name="Blagoev B."/>
            <person name="Gnad F."/>
            <person name="Macek B."/>
            <person name="Kumar C."/>
            <person name="Mortensen P."/>
            <person name="Mann M."/>
        </authorList>
    </citation>
    <scope>PHOSPHORYLATION [LARGE SCALE ANALYSIS] AT SER-310</scope>
    <scope>IDENTIFICATION BY MASS SPECTROMETRY [LARGE SCALE ANALYSIS]</scope>
    <source>
        <tissue>Cervix carcinoma</tissue>
    </source>
</reference>
<reference key="7">
    <citation type="journal article" date="2008" name="Proc. Natl. Acad. Sci. U.S.A.">
        <title>A quantitative atlas of mitotic phosphorylation.</title>
        <authorList>
            <person name="Dephoure N."/>
            <person name="Zhou C."/>
            <person name="Villen J."/>
            <person name="Beausoleil S.A."/>
            <person name="Bakalarski C.E."/>
            <person name="Elledge S.J."/>
            <person name="Gygi S.P."/>
        </authorList>
    </citation>
    <scope>PHOSPHORYLATION [LARGE SCALE ANALYSIS] AT SER-328; SER-330; THR-335 AND SER-357</scope>
    <scope>IDENTIFICATION BY MASS SPECTROMETRY [LARGE SCALE ANALYSIS]</scope>
    <source>
        <tissue>Cervix carcinoma</tissue>
    </source>
</reference>
<reference key="8">
    <citation type="journal article" date="2009" name="Sci. Signal.">
        <title>Quantitative phosphoproteomic analysis of T cell receptor signaling reveals system-wide modulation of protein-protein interactions.</title>
        <authorList>
            <person name="Mayya V."/>
            <person name="Lundgren D.H."/>
            <person name="Hwang S.-I."/>
            <person name="Rezaul K."/>
            <person name="Wu L."/>
            <person name="Eng J.K."/>
            <person name="Rodionov V."/>
            <person name="Han D.K."/>
        </authorList>
    </citation>
    <scope>PHOSPHORYLATION [LARGE SCALE ANALYSIS] AT SER-328 AND SER-330</scope>
    <scope>IDENTIFICATION BY MASS SPECTROMETRY [LARGE SCALE ANALYSIS]</scope>
    <source>
        <tissue>Leukemic T-cell</tissue>
    </source>
</reference>
<reference key="9">
    <citation type="journal article" date="2009" name="Science">
        <title>Lysine acetylation targets protein complexes and co-regulates major cellular functions.</title>
        <authorList>
            <person name="Choudhary C."/>
            <person name="Kumar C."/>
            <person name="Gnad F."/>
            <person name="Nielsen M.L."/>
            <person name="Rehman M."/>
            <person name="Walther T.C."/>
            <person name="Olsen J.V."/>
            <person name="Mann M."/>
        </authorList>
    </citation>
    <scope>ACETYLATION [LARGE SCALE ANALYSIS] AT LYS-345; LYS-346; LYS-354; LYS-359 AND LYS-948</scope>
    <scope>IDENTIFICATION BY MASS SPECTROMETRY [LARGE SCALE ANALYSIS]</scope>
</reference>
<reference key="10">
    <citation type="journal article" date="2010" name="EMBO J.">
        <title>Crosstalk between C/EBPbeta phosphorylation, arginine methylation, and SWI/SNF/Mediator implies an indexing transcription factor code.</title>
        <authorList>
            <person name="Kowenz-Leutz E."/>
            <person name="Pless O."/>
            <person name="Dittmar G."/>
            <person name="Knoblich M."/>
            <person name="Leutz A."/>
        </authorList>
    </citation>
    <scope>INTERACTION WITH CEBPB</scope>
</reference>
<reference key="11">
    <citation type="journal article" date="2010" name="Sci. Signal.">
        <title>Quantitative phosphoproteomics reveals widespread full phosphorylation site occupancy during mitosis.</title>
        <authorList>
            <person name="Olsen J.V."/>
            <person name="Vermeulen M."/>
            <person name="Santamaria A."/>
            <person name="Kumar C."/>
            <person name="Miller M.L."/>
            <person name="Jensen L.J."/>
            <person name="Gnad F."/>
            <person name="Cox J."/>
            <person name="Jensen T.S."/>
            <person name="Nigg E.A."/>
            <person name="Brunak S."/>
            <person name="Mann M."/>
        </authorList>
    </citation>
    <scope>PHOSPHORYLATION [LARGE SCALE ANALYSIS] AT SER-310; SER-328; SER-330; SER-357 AND SER-573</scope>
    <scope>IDENTIFICATION BY MASS SPECTROMETRY [LARGE SCALE ANALYSIS]</scope>
    <source>
        <tissue>Cervix carcinoma</tissue>
    </source>
</reference>
<reference key="12">
    <citation type="journal article" date="2011" name="BMC Syst. Biol.">
        <title>Initial characterization of the human central proteome.</title>
        <authorList>
            <person name="Burkard T.R."/>
            <person name="Planyavsky M."/>
            <person name="Kaupe I."/>
            <person name="Breitwieser F.P."/>
            <person name="Buerckstuemmer T."/>
            <person name="Bennett K.L."/>
            <person name="Superti-Furga G."/>
            <person name="Colinge J."/>
        </authorList>
    </citation>
    <scope>IDENTIFICATION BY MASS SPECTROMETRY [LARGE SCALE ANALYSIS]</scope>
</reference>
<reference key="13">
    <citation type="journal article" date="2011" name="Sci. Signal.">
        <title>System-wide temporal characterization of the proteome and phosphoproteome of human embryonic stem cell differentiation.</title>
        <authorList>
            <person name="Rigbolt K.T."/>
            <person name="Prokhorova T.A."/>
            <person name="Akimov V."/>
            <person name="Henningsen J."/>
            <person name="Johansen P.T."/>
            <person name="Kratchmarova I."/>
            <person name="Kassem M."/>
            <person name="Mann M."/>
            <person name="Olsen J.V."/>
            <person name="Blagoev B."/>
        </authorList>
    </citation>
    <scope>PHOSPHORYLATION [LARGE SCALE ANALYSIS] AT SER-328; SER-330; THR-335; SER-350; THR-398; SER-822 AND SER-825</scope>
    <scope>IDENTIFICATION BY MASS SPECTROMETRY [LARGE SCALE ANALYSIS]</scope>
</reference>
<reference key="14">
    <citation type="journal article" date="2012" name="Proc. Natl. Acad. Sci. U.S.A.">
        <title>N-terminal acetylome analyses and functional insights of the N-terminal acetyltransferase NatB.</title>
        <authorList>
            <person name="Van Damme P."/>
            <person name="Lasa M."/>
            <person name="Polevoda B."/>
            <person name="Gazquez C."/>
            <person name="Elosegui-Artola A."/>
            <person name="Kim D.S."/>
            <person name="De Juan-Pardo E."/>
            <person name="Demeyer K."/>
            <person name="Hole K."/>
            <person name="Larrea E."/>
            <person name="Timmerman E."/>
            <person name="Prieto J."/>
            <person name="Arnesen T."/>
            <person name="Sherman F."/>
            <person name="Gevaert K."/>
            <person name="Aldabe R."/>
        </authorList>
    </citation>
    <scope>ACETYLATION [LARGE SCALE ANALYSIS] AT ALA-2</scope>
    <scope>CLEAVAGE OF INITIATOR METHIONINE [LARGE SCALE ANALYSIS]</scope>
    <scope>IDENTIFICATION BY MASS SPECTROMETRY [LARGE SCALE ANALYSIS]</scope>
</reference>
<reference key="15">
    <citation type="journal article" date="2013" name="J. Proteome Res.">
        <title>Toward a comprehensive characterization of a human cancer cell phosphoproteome.</title>
        <authorList>
            <person name="Zhou H."/>
            <person name="Di Palma S."/>
            <person name="Preisinger C."/>
            <person name="Peng M."/>
            <person name="Polat A.N."/>
            <person name="Heck A.J."/>
            <person name="Mohammed S."/>
        </authorList>
    </citation>
    <scope>PHOSPHORYLATION [LARGE SCALE ANALYSIS] AT SER-310; SER-328; SER-330 AND SER-573</scope>
    <scope>IDENTIFICATION BY MASS SPECTROMETRY [LARGE SCALE ANALYSIS]</scope>
    <source>
        <tissue>Cervix carcinoma</tissue>
        <tissue>Erythroleukemia</tissue>
    </source>
</reference>
<reference key="16">
    <citation type="journal article" date="2014" name="J. Proteomics">
        <title>An enzyme assisted RP-RPLC approach for in-depth analysis of human liver phosphoproteome.</title>
        <authorList>
            <person name="Bian Y."/>
            <person name="Song C."/>
            <person name="Cheng K."/>
            <person name="Dong M."/>
            <person name="Wang F."/>
            <person name="Huang J."/>
            <person name="Sun D."/>
            <person name="Wang L."/>
            <person name="Ye M."/>
            <person name="Zou H."/>
        </authorList>
    </citation>
    <scope>PHOSPHORYLATION [LARGE SCALE ANALYSIS] AT SER-328 AND SER-330</scope>
    <scope>IDENTIFICATION BY MASS SPECTROMETRY [LARGE SCALE ANALYSIS]</scope>
    <source>
        <tissue>Liver</tissue>
    </source>
</reference>
<reference key="17">
    <citation type="journal article" date="2014" name="Nat. Struct. Mol. Biol.">
        <title>Uncovering global SUMOylation signaling networks in a site-specific manner.</title>
        <authorList>
            <person name="Hendriks I.A."/>
            <person name="D'Souza R.C."/>
            <person name="Yang B."/>
            <person name="Verlaan-de Vries M."/>
            <person name="Mann M."/>
            <person name="Vertegaal A.C."/>
        </authorList>
    </citation>
    <scope>SUMOYLATION [LARGE SCALE ANALYSIS] AT LYS-359</scope>
    <scope>IDENTIFICATION BY MASS SPECTROMETRY [LARGE SCALE ANALYSIS]</scope>
</reference>
<reference key="18">
    <citation type="journal article" date="2015" name="Mol. Cell. Proteomics">
        <title>System-wide analysis of SUMOylation dynamics in response to replication stress reveals novel small ubiquitin-like modified target proteins and acceptor lysines relevant for genome stability.</title>
        <authorList>
            <person name="Xiao Z."/>
            <person name="Chang J.G."/>
            <person name="Hendriks I.A."/>
            <person name="Sigurdsson J.O."/>
            <person name="Olsen J.V."/>
            <person name="Vertegaal A.C."/>
        </authorList>
    </citation>
    <scope>SUMOYLATION [LARGE SCALE ANALYSIS] AT LYS-359 AND LYS-592</scope>
    <scope>IDENTIFICATION BY MASS SPECTROMETRY [LARGE SCALE ANALYSIS]</scope>
</reference>
<reference key="19">
    <citation type="journal article" date="2015" name="Proteomics">
        <title>N-terminome analysis of the human mitochondrial proteome.</title>
        <authorList>
            <person name="Vaca Jacome A.S."/>
            <person name="Rabilloud T."/>
            <person name="Schaeffer-Reiss C."/>
            <person name="Rompais M."/>
            <person name="Ayoub D."/>
            <person name="Lane L."/>
            <person name="Bairoch A."/>
            <person name="Van Dorsselaer A."/>
            <person name="Carapito C."/>
        </authorList>
    </citation>
    <scope>IDENTIFICATION BY MASS SPECTROMETRY [LARGE SCALE ANALYSIS]</scope>
</reference>
<reference key="20">
    <citation type="journal article" date="2017" name="Nat. Struct. Mol. Biol.">
        <title>Site-specific mapping of the human SUMO proteome reveals co-modification with phosphorylation.</title>
        <authorList>
            <person name="Hendriks I.A."/>
            <person name="Lyon D."/>
            <person name="Young C."/>
            <person name="Jensen L.J."/>
            <person name="Vertegaal A.C."/>
            <person name="Nielsen M.L."/>
        </authorList>
    </citation>
    <scope>SUMOYLATION [LARGE SCALE ANALYSIS] AT LYS-179; LYS-359; LYS-592; LYS-739; LYS-796; LYS-829 AND LYS-856</scope>
    <scope>IDENTIFICATION BY MASS SPECTROMETRY [LARGE SCALE ANALYSIS]</scope>
</reference>
<reference key="21">
    <citation type="journal article" date="1999" name="Mol. Cell">
        <title>Reconstitution of a core chromatin remodeling complex from SWI/SNF subunits.</title>
        <authorList>
            <person name="Phelan M.L."/>
            <person name="Sif S."/>
            <person name="Narlikar G.J."/>
            <person name="Kingston R.E."/>
        </authorList>
    </citation>
    <scope>STIMULATION OF THE CHROMATIN-REMODELING ACTIVITY OF SMARCA4</scope>
</reference>
<reference key="22">
    <citation type="journal article" date="1999" name="Mol. Cell. Biol.">
        <title>Cyclin E associates with BAF155 and BRG1, components of the mammalian SWI-SNF complex, and alters the ability of BRG1 to induce growth arrest.</title>
        <authorList>
            <person name="Shanahan F."/>
            <person name="Seghezzi W."/>
            <person name="Parry D."/>
            <person name="Mahony D."/>
            <person name="Lees E."/>
        </authorList>
    </citation>
    <scope>INTERACTION WITH CCNE1</scope>
</reference>
<reference key="23">
    <citation type="journal article" date="2000" name="Genes Dev.">
        <title>Functional selectivity of recombinant mammalian SWI/SNF subunits.</title>
        <authorList>
            <person name="Kadam S."/>
            <person name="McAlpine G.S."/>
            <person name="Phelan M.L."/>
            <person name="Kingston R.E."/>
            <person name="Jones K.A."/>
            <person name="Emerson B.M."/>
        </authorList>
    </citation>
    <scope>FUNCTION</scope>
</reference>
<reference key="24">
    <citation type="journal article" date="2001" name="Genes Dev.">
        <title>Purification and characterization of mSin3A-containing Brg1 and hBrm chromatin remodeling complexes.</title>
        <authorList>
            <person name="Sif S."/>
            <person name="Saurin A.J."/>
            <person name="Imbalzano A.N."/>
            <person name="Kingston R.E."/>
        </authorList>
    </citation>
    <scope>INTERACTION WITH SIN3A</scope>
</reference>
<reference key="25">
    <citation type="journal article" date="2003" name="Mol. Cell. Biol.">
        <title>BAF60a mediates critical interactions between nuclear receptors and the BRG1 chromatin-remodeling complex for transactivation.</title>
        <authorList>
            <person name="Hsiao P.W."/>
            <person name="Fryer C.J."/>
            <person name="Trotter K.W."/>
            <person name="Wang W."/>
            <person name="Archer T.K."/>
        </authorList>
    </citation>
    <scope>INTERACTION WITH NR3C1 AND SMARD1</scope>
</reference>
<reference key="26">
    <citation type="journal article" date="2008" name="Genes Dev.">
        <title>Regulation of muscle development by DPF3, a novel histone acetylation and methylation reader of the BAF chromatin remodeling complex.</title>
        <authorList>
            <person name="Lange M."/>
            <person name="Kaynak B."/>
            <person name="Forster U.B."/>
            <person name="Toenjes M."/>
            <person name="Fischer J.J."/>
            <person name="Grimm C."/>
            <person name="Schlesinger J."/>
            <person name="Just S."/>
            <person name="Dunkel I."/>
            <person name="Krueger T."/>
            <person name="Mebus S."/>
            <person name="Lehrach H."/>
            <person name="Lurz R."/>
            <person name="Gobom J."/>
            <person name="Rottbauer W."/>
            <person name="Abdelilah-Seyfried S."/>
            <person name="Sperling S."/>
        </authorList>
    </citation>
    <scope>IDENTIFICATION IN THE BAF COMPLEX</scope>
    <scope>IDENTIFICATION BY MASS SPECTROMETRY</scope>
</reference>
<reference key="27">
    <citation type="journal article" date="2010" name="J. Biol. Chem.">
        <title>Ubiquitin-dependent and ubiquitin-independent control of subunit stoichiometry in the SWI/SNF complex.</title>
        <authorList>
            <person name="Keppler B.R."/>
            <person name="Archer T.K."/>
        </authorList>
    </citation>
    <scope>INTERACTION WITH TRIP12</scope>
</reference>
<reference key="28">
    <citation type="journal article" date="2012" name="J. Biol. Chem.">
        <title>SWI/SNF chromatin-remodeling factors: multiscale analyses and diverse functions.</title>
        <authorList>
            <person name="Euskirchen G."/>
            <person name="Auerbach R.K."/>
            <person name="Snyder M."/>
        </authorList>
    </citation>
    <scope>REVIEW ON SWI/SNF CHROMATIN REMODELING COMPLEXES</scope>
</reference>
<reference key="29">
    <citation type="journal article" date="2015" name="Sci. Adv.">
        <title>Mammalian SWI/SNF chromatin remodeling complexes and cancer: Mechanistic insights gained from human genomics.</title>
        <authorList>
            <person name="Kadoch C."/>
            <person name="Crabtree G.R."/>
        </authorList>
    </citation>
    <scope>REVIEW ON SWI/SNF CHROMATIN REMODELING COMPLEXES</scope>
</reference>
<reference key="30">
    <citation type="submission" date="2008-04" db="PDB data bank">
        <title>Solution structure of the SANT domain of human SWI/SNF-related matrix-associated actin-dependent regulator of chromatin subfamily C member 1.</title>
        <authorList>
            <consortium name="RIKEN structural genomics initiative (RSGI)"/>
        </authorList>
    </citation>
    <scope>STRUCTURE BY NMR OF 607-676</scope>
</reference>
<reference key="31">
    <citation type="journal article" date="2017" name="PLoS Genet.">
        <title>Nuclear/cytoplasmic transport defects in BBS6 underlie congenital heart disease through perturbation of a chromatin remodeling protein.</title>
        <authorList>
            <person name="Scott C.A."/>
            <person name="Marsden A.N."/>
            <person name="Rebagliati M.R."/>
            <person name="Zhang Q."/>
            <person name="Chamling X."/>
            <person name="Searby C.C."/>
            <person name="Baye L.M."/>
            <person name="Sheffield V.C."/>
            <person name="Slusarski D.C."/>
        </authorList>
    </citation>
    <scope>INTERACTION WITH MKKS</scope>
    <scope>SUBCELLULAR LOCATION</scope>
</reference>
<reference key="32">
    <citation type="journal article" date="2017" name="Proc. Natl. Acad. Sci. U.S.A.">
        <title>Histone-binding of DPF2 mediates its repressive role in myeloid differentiation.</title>
        <authorList>
            <person name="Huber F.M."/>
            <person name="Greenblatt S.M."/>
            <person name="Davenport A.M."/>
            <person name="Martinez C."/>
            <person name="Xu Y."/>
            <person name="Vu L.P."/>
            <person name="Nimer S.D."/>
            <person name="Hoelz A."/>
        </authorList>
    </citation>
    <scope>INTERACTION WITH DPF2</scope>
</reference>
<reference key="33">
    <citation type="journal article" date="2018" name="J. Biol. Chem.">
        <title>Glioma tumor suppressor candidate region gene 1 (GLTSCR1) and its paralog GLTSCR1-like form SWI/SNF chromatin remodeling subcomplexes.</title>
        <authorList>
            <person name="Alpsoy A."/>
            <person name="Dykhuizen E.C."/>
        </authorList>
    </citation>
    <scope>FUNCTION</scope>
    <scope>IDENTIFICATION IN THE GBAF COMPLEX</scope>
</reference>
<reference key="34">
    <citation type="journal article" date="2020" name="Biochim. Biophys. Acta">
        <title>LDB1 and the SWI/SNF complex participate in both transcriptional activation and repression by Caenorhabditis elegans BLIMP1/PRDM1.</title>
        <authorList>
            <person name="Fong H.T."/>
            <person name="Hagen T."/>
            <person name="Inoue T."/>
        </authorList>
    </citation>
    <scope>INTERACTION WITH PRDM1</scope>
</reference>
<reference key="35">
    <citation type="journal article" date="2020" name="Nucleic Acids Res.">
        <title>HRP2-DPF3a-BAF complex coordinates histone modification and chromatin remodeling to regulate myogenic gene transcription.</title>
        <authorList>
            <person name="Zhu X."/>
            <person name="Lan B."/>
            <person name="Yi X."/>
            <person name="He C."/>
            <person name="Dang L."/>
            <person name="Zhou X."/>
            <person name="Lu Y."/>
            <person name="Sun Y."/>
            <person name="Liu Z."/>
            <person name="Bai X."/>
            <person name="Zhang K."/>
            <person name="Li B."/>
            <person name="Li M.J."/>
            <person name="Chen Y."/>
            <person name="Zhang L."/>
        </authorList>
    </citation>
    <scope>INTERACTION WITH HDGFL2 AND DPF3</scope>
</reference>
<reference key="36">
    <citation type="journal article" date="2018" name="Neuron">
        <title>De Novo Mutation in Genes Regulating Neural Stem Cell Fate in Human Congenital Hydrocephalus.</title>
        <authorList>
            <person name="Furey C.G."/>
            <person name="Choi J."/>
            <person name="Jin S.C."/>
            <person name="Zeng X."/>
            <person name="Timberlake A.T."/>
            <person name="Nelson-Williams C."/>
            <person name="Mansuri M.S."/>
            <person name="Lu Q."/>
            <person name="Duran D."/>
            <person name="Panchagnula S."/>
            <person name="Allocco A."/>
            <person name="Karimy J.K."/>
            <person name="Khanna A."/>
            <person name="Gaillard J.R."/>
            <person name="DeSpenza T."/>
            <person name="Antwi P."/>
            <person name="Loring E."/>
            <person name="Butler W.E."/>
            <person name="Smith E.R."/>
            <person name="Warf B.C."/>
            <person name="Strahle J.M."/>
            <person name="Limbrick D.D."/>
            <person name="Storm P.B."/>
            <person name="Heuer G."/>
            <person name="Jackson E.M."/>
            <person name="Iskandar B.J."/>
            <person name="Johnston J.M."/>
            <person name="Tikhonova I."/>
            <person name="Castaldi C."/>
            <person name="Lopez-Giraldez F."/>
            <person name="Bjornson R.D."/>
            <person name="Knight J.R."/>
            <person name="Bilguvar K."/>
            <person name="Mane S."/>
            <person name="Alper S.L."/>
            <person name="Haider S."/>
            <person name="Guclu B."/>
            <person name="Bayri Y."/>
            <person name="Sahin Y."/>
            <person name="Apuzzo M.L.J."/>
            <person name="Duncan C.C."/>
            <person name="DiLuna M.L."/>
            <person name="Guenel M."/>
            <person name="Lifton R.P."/>
            <person name="Kahle K.T."/>
        </authorList>
    </citation>
    <scope>VARIANTS HYC5 179-LYS--PRO-1105 DEL AND PRO-526</scope>
    <scope>INVOLVEMENT IN HYC5</scope>
</reference>
<reference key="37">
    <citation type="journal article" date="2020" name="Nat. Med.">
        <title>Exome sequencing implicates genetic disruption of prenatal neuro-gliogenesis in sporadic congenital hydrocephalus.</title>
        <authorList>
            <person name="Jin S.C."/>
            <person name="Dong W."/>
            <person name="Kundishora A.J."/>
            <person name="Panchagnula S."/>
            <person name="Moreno-De-Luca A."/>
            <person name="Furey C.G."/>
            <person name="Allocco A.A."/>
            <person name="Walker R.L."/>
            <person name="Nelson-Williams C."/>
            <person name="Smith H."/>
            <person name="Dunbar A."/>
            <person name="Conine S."/>
            <person name="Lu Q."/>
            <person name="Zeng X."/>
            <person name="Sierant M.C."/>
            <person name="Knight J.R."/>
            <person name="Sullivan W."/>
            <person name="Duy P.Q."/>
            <person name="DeSpenza T."/>
            <person name="Reeves B.C."/>
            <person name="Karimy J.K."/>
            <person name="Marlier A."/>
            <person name="Castaldi C."/>
            <person name="Tikhonova I.R."/>
            <person name="Li B."/>
            <person name="Pena H.P."/>
            <person name="Broach J.R."/>
            <person name="Kabachelor E.M."/>
            <person name="Ssenyonga P."/>
            <person name="Hehnly C."/>
            <person name="Ge L."/>
            <person name="Keren B."/>
            <person name="Timberlake A.T."/>
            <person name="Goto J."/>
            <person name="Mangano F.T."/>
            <person name="Johnston J.M."/>
            <person name="Butler W.E."/>
            <person name="Warf B.C."/>
            <person name="Smith E.R."/>
            <person name="Schiff S.J."/>
            <person name="Limbrick D.D. Jr."/>
            <person name="Heuer G."/>
            <person name="Jackson E.M."/>
            <person name="Iskandar B.J."/>
            <person name="Mane S."/>
            <person name="Haider S."/>
            <person name="Guclu B."/>
            <person name="Bayri Y."/>
            <person name="Sahin Y."/>
            <person name="Duncan C.C."/>
            <person name="Apuzzo M.L.J."/>
            <person name="DiLuna M.L."/>
            <person name="Hoffman E.J."/>
            <person name="Sestan N."/>
            <person name="Ment L.R."/>
            <person name="Alper S.L."/>
            <person name="Bilguvar K."/>
            <person name="Geschwind D.H."/>
            <person name="Guenel M."/>
            <person name="Lifton R.P."/>
            <person name="Kahle K.T."/>
        </authorList>
    </citation>
    <scope>VARIANTS HYC5 575-GLN--PRO-1105 DEL AND CYS-652</scope>
    <scope>INVOLVEMENT IN HYC5</scope>
</reference>